<reference key="1">
    <citation type="journal article" date="2008" name="J. Bacteriol.">
        <title>Genome sequence of Staphylococcus aureus strain Newman and comparative analysis of staphylococcal genomes: polymorphism and evolution of two major pathogenicity islands.</title>
        <authorList>
            <person name="Baba T."/>
            <person name="Bae T."/>
            <person name="Schneewind O."/>
            <person name="Takeuchi F."/>
            <person name="Hiramatsu K."/>
        </authorList>
    </citation>
    <scope>NUCLEOTIDE SEQUENCE [LARGE SCALE GENOMIC DNA]</scope>
    <source>
        <strain>Newman</strain>
    </source>
</reference>
<reference key="2">
    <citation type="journal article" date="2003" name="Science">
        <title>Passage of heme-iron across the envelope of Staphylococcus aureus.</title>
        <authorList>
            <person name="Mazmanian S.K."/>
            <person name="Skaar E.P."/>
            <person name="Gaspar A.H."/>
            <person name="Humayun M."/>
            <person name="Gornicki P."/>
            <person name="Jelenska J."/>
            <person name="Joachmiak A."/>
            <person name="Missiakas D.M."/>
            <person name="Schneewind O."/>
        </authorList>
    </citation>
    <scope>INTERACTION WITH HEMOGLOBIN</scope>
    <scope>FUNCTION IN IRON ACQUISITION</scope>
    <scope>IRON-REGULATED EXPRESSION</scope>
</reference>
<reference key="3">
    <citation type="journal article" date="2006" name="Proc. Natl. Acad. Sci. U.S.A.">
        <title>Vaccine assembly from surface proteins of Staphylococcus aureus.</title>
        <authorList>
            <person name="Stranger-Jones Y.K."/>
            <person name="Bae T."/>
            <person name="Schneewind O."/>
        </authorList>
    </citation>
    <scope>BIOTECHNOLOGY</scope>
</reference>
<reference key="4">
    <citation type="journal article" date="2007" name="Mol. Microbiol.">
        <title>Haem recognition by a Staphylococcus aureus NEAT domain.</title>
        <authorList>
            <person name="Grigg J.C."/>
            <person name="Vermeiren C.L."/>
            <person name="Heinrichs D.E."/>
            <person name="Murphy M.E.P."/>
        </authorList>
    </citation>
    <scope>FUNCTION</scope>
    <scope>DISRUPTION PHENOTYPE</scope>
</reference>
<reference key="5">
    <citation type="journal article" date="2007" name="Cell Host Microbe">
        <title>The Staphylococcus aureus surface protein IsdA mediates resistance to innate defenses of human skin.</title>
        <authorList>
            <person name="Clarke S.R."/>
            <person name="Mohamed R."/>
            <person name="Bian L."/>
            <person name="Routh A.F."/>
            <person name="Kokai-Kun J.F."/>
            <person name="Mond J.J."/>
            <person name="Tarkowski A."/>
            <person name="Foster S.J."/>
        </authorList>
    </citation>
    <scope>FUNCTION</scope>
</reference>
<reference key="6">
    <citation type="journal article" date="2008" name="Infect. Immun.">
        <title>IsdA protects Staphylococcus aureus against the bactericidal protease activity of apolactoferrin.</title>
        <authorList>
            <person name="Clarke S.R."/>
            <person name="Foster S.J."/>
        </authorList>
    </citation>
    <scope>FUNCTION</scope>
    <scope>INTERACTION WITH LACTOFERRIN</scope>
</reference>
<reference key="7">
    <citation type="journal article" date="2008" name="J. Immunol.">
        <title>Neutrophil microbicides induce a pathogen survival response in community-associated methicillin-resistant Staphylococcus aureus.</title>
        <authorList>
            <person name="Palazzolo-Ballance A.M."/>
            <person name="Reniere M.L."/>
            <person name="Braughton K.R."/>
            <person name="Sturdevant D.E."/>
            <person name="Otto M."/>
            <person name="Kreiswirth B.N."/>
            <person name="Skaar E.P."/>
            <person name="DeLeo F.R."/>
        </authorList>
    </citation>
    <scope>FUNCTION IN RESISTANCE TO INNATE HOST DEFENSE</scope>
</reference>
<reference key="8">
    <citation type="journal article" date="2009" name="Infect. Immun.">
        <title>Subcellular localization of the Staphylococcus aureus heme iron transport components IsdA and IsdB.</title>
        <authorList>
            <person name="Pishchany G."/>
            <person name="Dickey S.E."/>
            <person name="Skaar E.P."/>
        </authorList>
    </citation>
    <scope>SUBCELLULAR LOCATION</scope>
    <scope>INTERACTION WITH ISDB</scope>
</reference>
<accession>A6QG31</accession>
<gene>
    <name type="primary">isdA</name>
    <name type="synonym">frpA</name>
    <name type="synonym">stbA</name>
    <name type="ordered locus">NWMN_1041</name>
</gene>
<dbReference type="EMBL" id="AP009351">
    <property type="protein sequence ID" value="BAF67313.1"/>
    <property type="molecule type" value="Genomic_DNA"/>
</dbReference>
<dbReference type="RefSeq" id="WP_000160859.1">
    <property type="nucleotide sequence ID" value="NZ_JBBIAE010000001.1"/>
</dbReference>
<dbReference type="SMR" id="A6QG31"/>
<dbReference type="KEGG" id="sae:NWMN_1041"/>
<dbReference type="HOGENOM" id="CLU_068057_0_0_9"/>
<dbReference type="PRO" id="PR:A6QG31"/>
<dbReference type="Proteomes" id="UP000006386">
    <property type="component" value="Chromosome"/>
</dbReference>
<dbReference type="GO" id="GO:0005576">
    <property type="term" value="C:extracellular region"/>
    <property type="evidence" value="ECO:0007669"/>
    <property type="project" value="UniProtKB-KW"/>
</dbReference>
<dbReference type="GO" id="GO:0046872">
    <property type="term" value="F:metal ion binding"/>
    <property type="evidence" value="ECO:0007669"/>
    <property type="project" value="UniProtKB-KW"/>
</dbReference>
<dbReference type="CDD" id="cd06920">
    <property type="entry name" value="NEAT"/>
    <property type="match status" value="1"/>
</dbReference>
<dbReference type="Gene3D" id="2.60.40.1850">
    <property type="match status" value="1"/>
</dbReference>
<dbReference type="InterPro" id="IPR050436">
    <property type="entry name" value="IsdA"/>
</dbReference>
<dbReference type="InterPro" id="IPR019931">
    <property type="entry name" value="LPXTG_anchor"/>
</dbReference>
<dbReference type="InterPro" id="IPR006635">
    <property type="entry name" value="NEAT_dom"/>
</dbReference>
<dbReference type="InterPro" id="IPR037250">
    <property type="entry name" value="NEAT_dom_sf"/>
</dbReference>
<dbReference type="NCBIfam" id="TIGR01167">
    <property type="entry name" value="LPXTG_anchor"/>
    <property type="match status" value="1"/>
</dbReference>
<dbReference type="PANTHER" id="PTHR37824">
    <property type="entry name" value="IRON-REGULATED SURFACE DETERMINANT PROTEIN C"/>
    <property type="match status" value="1"/>
</dbReference>
<dbReference type="PANTHER" id="PTHR37824:SF1">
    <property type="entry name" value="IRON-REGULATED SURFACE DETERMINANT PROTEIN C"/>
    <property type="match status" value="1"/>
</dbReference>
<dbReference type="Pfam" id="PF00746">
    <property type="entry name" value="Gram_pos_anchor"/>
    <property type="match status" value="1"/>
</dbReference>
<dbReference type="Pfam" id="PF05031">
    <property type="entry name" value="NEAT"/>
    <property type="match status" value="1"/>
</dbReference>
<dbReference type="SMART" id="SM00725">
    <property type="entry name" value="NEAT"/>
    <property type="match status" value="1"/>
</dbReference>
<dbReference type="SUPFAM" id="SSF158911">
    <property type="entry name" value="NEAT domain-like"/>
    <property type="match status" value="1"/>
</dbReference>
<dbReference type="PROSITE" id="PS50847">
    <property type="entry name" value="GRAM_POS_ANCHORING"/>
    <property type="match status" value="1"/>
</dbReference>
<dbReference type="PROSITE" id="PS50978">
    <property type="entry name" value="NEAT"/>
    <property type="match status" value="1"/>
</dbReference>
<organism>
    <name type="scientific">Staphylococcus aureus (strain Newman)</name>
    <dbReference type="NCBI Taxonomy" id="426430"/>
    <lineage>
        <taxon>Bacteria</taxon>
        <taxon>Bacillati</taxon>
        <taxon>Bacillota</taxon>
        <taxon>Bacilli</taxon>
        <taxon>Bacillales</taxon>
        <taxon>Staphylococcaceae</taxon>
        <taxon>Staphylococcus</taxon>
    </lineage>
</organism>
<keyword id="KW-0134">Cell wall</keyword>
<keyword id="KW-0349">Heme</keyword>
<keyword id="KW-0408">Iron</keyword>
<keyword id="KW-0479">Metal-binding</keyword>
<keyword id="KW-0572">Peptidoglycan-anchor</keyword>
<keyword id="KW-0964">Secreted</keyword>
<keyword id="KW-0732">Signal</keyword>
<proteinExistence type="evidence at protein level"/>
<comment type="function">
    <text evidence="2 7 9 10 11 12">Cell wall-anchored surface receptor that participates in the extraction of heme from oxidized methemoglobin/metHb to enable growth on hemoglobin as a sole iron source (PubMed:12574635, PubMed:17229211). Receives heme from IsdB and transfers it to IsdC (By similarity). Plays also a role in the inhibition of host immune response (PubMed:18005699, PubMed:18097052, PubMed:18227165). Protects S.aureus against the bactericidal protease activity of apolactoferrin (PubMed:18097052). Decreases bacterial cellular hydrophobicity, which renders S.aureus resistant to bactericidal human skin fatty acids as well as to beta-defensins and cathelicidin (PubMed:18005699). Also binds fibronectin and chains B-beta and gamma of fibrinogen, promoting clumping of S.aureus with fibrinogen. Involved in adherence of S.aureus to human desquamated nasal epithelial cells and is required for nasal colonization.</text>
</comment>
<comment type="subunit">
    <text evidence="2 13">Monomer. Interacts with IsdC (By similarity). Interacts with IsdB (PubMed:19398548).</text>
</comment>
<comment type="subcellular location">
    <subcellularLocation>
        <location evidence="13">Secreted</location>
        <location evidence="13">Cell wall</location>
        <topology evidence="14">Peptidoglycan-anchor</topology>
    </subcellularLocation>
    <text evidence="15">Encodes an LPXTG motif-containing sorting signal that targets to the cell wall, which is catalyzed by sortase A.</text>
</comment>
<comment type="induction">
    <text>Repressed by fur in the presence of iron.</text>
</comment>
<comment type="domain">
    <text>The NEAT domain is responsible for binding Fe(3+) and Fe(2+) heme and fibrinogen. The NEAT domain is an inhibitor of apolactoferrin activity, while the C-domain confers resistance to bovine lactoferricin.</text>
</comment>
<comment type="disruption phenotype">
    <text evidence="9">Inactivation leads to a decrease both in the amount of heme-iron associated with S.aureus cells and the amount of heme-iron that enters the staphylococcal cytoplasm.</text>
</comment>
<comment type="biotechnology">
    <text evidence="8">A combined vaccine containing IsdA, IsdB, SdrD and SdrE afforded significant protection in mice against a lethal challenge with S.aureus Newman or any of the clinical isolates NRS252, N315, NRS248, USA100 and USA400. The immune response elicited by the combined vaccine is greater than the one elicited by its individual components.</text>
</comment>
<comment type="similarity">
    <text evidence="14">Belongs to the IsdA family.</text>
</comment>
<protein>
    <recommendedName>
        <fullName>Iron-regulated surface determinant protein A</fullName>
    </recommendedName>
    <alternativeName>
        <fullName>Fur-regulated protein A</fullName>
    </alternativeName>
    <alternativeName>
        <fullName>Staphylococcal transferrin-binding protein A</fullName>
    </alternativeName>
</protein>
<feature type="signal peptide" evidence="1">
    <location>
        <begin position="1"/>
        <end position="46"/>
    </location>
</feature>
<feature type="chain" id="PRO_0000317039" description="Iron-regulated surface determinant protein A">
    <location>
        <begin position="47"/>
        <end position="316"/>
    </location>
</feature>
<feature type="propeptide" id="PRO_0000317040" description="Removed by sortase A" evidence="5">
    <location>
        <begin position="317"/>
        <end position="350"/>
    </location>
</feature>
<feature type="domain" description="NEAT" evidence="4">
    <location>
        <begin position="62"/>
        <end position="184"/>
    </location>
</feature>
<feature type="region of interest" description="Disordered" evidence="6">
    <location>
        <begin position="188"/>
        <end position="314"/>
    </location>
</feature>
<feature type="short sequence motif" description="LPXTG sorting signal" evidence="5">
    <location>
        <begin position="313"/>
        <end position="317"/>
    </location>
</feature>
<feature type="compositionally biased region" description="Low complexity" evidence="6">
    <location>
        <begin position="203"/>
        <end position="214"/>
    </location>
</feature>
<feature type="compositionally biased region" description="Polar residues" evidence="6">
    <location>
        <begin position="252"/>
        <end position="268"/>
    </location>
</feature>
<feature type="compositionally biased region" description="Polar residues" evidence="6">
    <location>
        <begin position="278"/>
        <end position="296"/>
    </location>
</feature>
<feature type="compositionally biased region" description="Basic and acidic residues" evidence="6">
    <location>
        <begin position="299"/>
        <end position="314"/>
    </location>
</feature>
<feature type="binding site" evidence="1">
    <location>
        <position position="75"/>
    </location>
    <ligand>
        <name>heme</name>
        <dbReference type="ChEBI" id="CHEBI:30413"/>
    </ligand>
</feature>
<feature type="binding site" evidence="1">
    <location>
        <position position="82"/>
    </location>
    <ligand>
        <name>heme</name>
        <dbReference type="ChEBI" id="CHEBI:30413"/>
    </ligand>
</feature>
<feature type="binding site" description="axial binding residue" evidence="3">
    <location>
        <position position="166"/>
    </location>
    <ligand>
        <name>heme</name>
        <dbReference type="ChEBI" id="CHEBI:30413"/>
    </ligand>
    <ligandPart>
        <name>Fe</name>
        <dbReference type="ChEBI" id="CHEBI:18248"/>
    </ligandPart>
</feature>
<feature type="modified residue" description="Pentaglycyl murein peptidoglycan amidated threonine" evidence="5">
    <location>
        <position position="316"/>
    </location>
</feature>
<sequence length="350" mass="38746">MTKHYLNSKYQSEQRSSAMKKITMGTASIILGSLVYIGADSQQVNAATEATNATNNQSTQVSQATSQPINFQVQKDGSSEKSHMDDYMQHPGKVIKQNNKYYFQTVLNNASFWKEYKFYNANNQELATTVVNDNKKADTRTINVAVEPGYKSLTTKVHIVVPQINYNHRYTTHLEFEKAIPTLADAAKPNNVKPVQPKPAQPKTPTEQTKPVQPKVEKVKPTVTTTSKVEDNHSTKVVSTDTTKDQTKTQTAHTVKTAQTAQEQNKVQTPVKDVATAKSESNNQAVSDNKSQQTNKVTKHNETPKQASKAKELPKTGLTSVDNFISTVAFATLALLGSLSLLLFKRKESK</sequence>
<name>ISDA_STAAE</name>
<evidence type="ECO:0000250" key="1"/>
<evidence type="ECO:0000250" key="2">
    <source>
        <dbReference type="UniProtKB" id="Q7A152"/>
    </source>
</evidence>
<evidence type="ECO:0000250" key="3">
    <source>
        <dbReference type="UniProtKB" id="Q7A655"/>
    </source>
</evidence>
<evidence type="ECO:0000255" key="4">
    <source>
        <dbReference type="PROSITE-ProRule" id="PRU00337"/>
    </source>
</evidence>
<evidence type="ECO:0000255" key="5">
    <source>
        <dbReference type="PROSITE-ProRule" id="PRU00477"/>
    </source>
</evidence>
<evidence type="ECO:0000256" key="6">
    <source>
        <dbReference type="SAM" id="MobiDB-lite"/>
    </source>
</evidence>
<evidence type="ECO:0000269" key="7">
    <source>
    </source>
</evidence>
<evidence type="ECO:0000269" key="8">
    <source>
    </source>
</evidence>
<evidence type="ECO:0000269" key="9">
    <source>
    </source>
</evidence>
<evidence type="ECO:0000269" key="10">
    <source>
    </source>
</evidence>
<evidence type="ECO:0000269" key="11">
    <source>
    </source>
</evidence>
<evidence type="ECO:0000269" key="12">
    <source>
    </source>
</evidence>
<evidence type="ECO:0000269" key="13">
    <source>
    </source>
</evidence>
<evidence type="ECO:0000305" key="14"/>
<evidence type="ECO:0000305" key="15">
    <source>
    </source>
</evidence>